<sequence>MFQSFFHNNGPAAAGETFSDSRSYPLTNHQEVPRNGLNELASSATKAQQQPTHILNSYPITGSNPLMRASAMGATSGSINPNMSNMNEHIRVSGMGTSKPLDLAGKYIDHLQHKDSNTPVLDERSYYNSGVDYNFSREKNGLGAFTPFEKQDVFNIPDEILHEFSTSQTKTDMGIFPELNRCWITIDNKLILWNINNDNEYQVVDDMKHTIQKVALVRPKPNTFVPAVKHLLLISTTMELFMFAISLDKATNELSVFNTHLSVPVQGIDVIDIVSHERSGRIFFAGQASGLNIWELHYSGSDDWFNSKCSKVCLTKSALLSLLPTNMLSQIPGVDFIQALFEDNSNGNGGFSQETITQLTIDQQRGIIYSLSSKSTIRAYVITEKSLEGPMSIEPAYISRIIGTTTARAAPILGPKYLKIVKISSVAPEENNNLFLVALTVGGVRLYFNGSMGRFNIEALRLESIKFPPSSVTPEVIQQELLHQQQEQAKRSFPFFSNLMSSEPVLLKFQKKSSVLLETTKASTIISPGIFFSAVIKSSQQTHQQEKKENSSVTGTTATAGSKTVKQQPVTLQHKLFVSVPDYGILKTHGKYVENATFLETAGPVQQIIPLSGLFNATTKPQGFANEFATQYTSETLRVAVLTSTSIEIYKYRTPDEIFEDLIDNPLPFVLNYGAAEACSTALFVTCKSNKSEKLRSNALTFLTMGIPGVVDIKPVYNRYSVSTVSSLLSKPTLSTATTNLQQSITGFSKPSPANKEDFDLDDVILSPRFYGIALLITRLLRDIWGRHVFMTFTDNRVTSHAFISSSDPITPSINNLKSDEISQNRNIISKVSISKDCIEYYLSSINILNEFFITYGDSISQISAPYVLANNSNGRVIDKTEEVANQAESIAINAMIKMVQSIKEGLSFLNVLYEESEVEGFDNQYLGFKDIISFVSLDVQKDLVKLDFKDLFAPNDKTKSLIREILLSIINRNITKGASIEYTATALQERCGSFCSASDILGFRAIEHLRRAKEIGLRNYDSLNYHLKNATALLEQIVDDLSIEKLKEAVSMMLSVNYYPKSIEFLLNIANSMDKGKLACQYVANGFLENDDRKQYYDKRILVYDLVFDTLIKVDELAEKKQSSKTQNQISISNDDEVKLRQKSYEAALKYNDRLFHYHMYDWLVSQNREEKLLDIETPFILPYLMEKAGSSLKISNILWVYYSRRSKFFESAEILYRLATSNFDITLFERIEFLSRANGFCNSVSPLSQKQRIVQLASRIQDACEVAGIQGDILSLVYTDARIDSAIKDELIKTLDGKILSTSELFNDFAVPLSYHEIALFIFKIADFRDHEVIMAKWDELFQSLRMEFNNTGKKEDSMNFINLLSNVLIKIGKNVQDSEFIFPIFELFPIVCNFFYETLPKEHIVSGSIVSIFITAGVSFNKMYYILKELIETSDSDNSVFNKEMTWLIHEWYKSDRKFRDIISYNDIIHLKEYKIDNDPIEKYVKNSGNNLGICFYKE</sequence>
<accession>P38181</accession>
<accession>D6VPS4</accession>
<organism>
    <name type="scientific">Saccharomyces cerevisiae (strain ATCC 204508 / S288c)</name>
    <name type="common">Baker's yeast</name>
    <dbReference type="NCBI Taxonomy" id="559292"/>
    <lineage>
        <taxon>Eukaryota</taxon>
        <taxon>Fungi</taxon>
        <taxon>Dikarya</taxon>
        <taxon>Ascomycota</taxon>
        <taxon>Saccharomycotina</taxon>
        <taxon>Saccharomycetes</taxon>
        <taxon>Saccharomycetales</taxon>
        <taxon>Saccharomycetaceae</taxon>
        <taxon>Saccharomyces</taxon>
    </lineage>
</organism>
<protein>
    <recommendedName>
        <fullName>Nucleoporin NUP170</fullName>
    </recommendedName>
    <alternativeName>
        <fullName>Nuclear pore protein NUP170</fullName>
    </alternativeName>
</protein>
<comment type="function">
    <text evidence="3 4 5 6 8 9">Functions as a component of the nuclear pore complex (NPC). NPC components, collectively referred to as nucleoporins (NUPs), can play the role of both NPC structural components and of docking or interaction partners for transiently associated nuclear transport factors. NUP170 probably plays an important role in NPC assembly and organization. In addition it is required for chromosome transmission fidelity.</text>
</comment>
<comment type="subunit">
    <text evidence="3">Component of the nuclear pore complex (NPC). NPC constitutes the exclusive means of nucleocytoplasmic transport. NPCs allow the passive diffusion of ions and small molecules and the active, nuclear transport receptor-mediated bidirectional transport of macromolecules such as proteins, RNAs, ribonucleoparticles (RNPs), and ribosomal subunits across the nuclear envelope. Due to its 8-fold rotational symmetry, all subunits are present with 8 copies or multiples thereof. During mitosis NUP53 changes its binding partner within the NPC from NUP170 to NIC96, exposing a high affinity binding site for the karyopherin PSE1, and retaining it in the NPC.</text>
</comment>
<comment type="interaction">
    <interactant intactId="EBI-11756">
        <id>P38181</id>
    </interactant>
    <interactant intactId="EBI-11730">
        <id>P49687</id>
        <label>NUP145</label>
    </interactant>
    <organismsDiffer>false</organismsDiffer>
    <experiments>4</experiments>
</comment>
<comment type="interaction">
    <interactant intactId="EBI-11756">
        <id>P38181</id>
    </interactant>
    <interactant intactId="EBI-11740">
        <id>P40064</id>
        <label>NUP157</label>
    </interactant>
    <organismsDiffer>false</organismsDiffer>
    <experiments>3</experiments>
</comment>
<comment type="interaction">
    <interactant intactId="EBI-11756">
        <id>P38181</id>
    </interactant>
    <interactant intactId="EBI-27321">
        <id>Q03790</id>
        <label>NUP53</label>
    </interactant>
    <organismsDiffer>false</organismsDiffer>
    <experiments>6</experiments>
</comment>
<comment type="interaction">
    <interactant intactId="EBI-11756">
        <id>P38181</id>
    </interactant>
    <interactant intactId="EBI-12324">
        <id>P48837</id>
        <label>NUP57</label>
    </interactant>
    <organismsDiffer>false</organismsDiffer>
    <experiments>2</experiments>
</comment>
<comment type="interaction">
    <interactant intactId="EBI-11756">
        <id>P38181</id>
    </interactant>
    <interactant intactId="EBI-17237">
        <id>P11978</id>
        <label>SIR4</label>
    </interactant>
    <organismsDiffer>false</organismsDiffer>
    <experiments>3</experiments>
</comment>
<comment type="interaction">
    <interactant intactId="EBI-11756">
        <id>P38181</id>
    </interactant>
    <interactant intactId="EBI-18410">
        <id>P32597</id>
        <label>STH1</label>
    </interactant>
    <organismsDiffer>false</organismsDiffer>
    <experiments>3</experiments>
</comment>
<comment type="subcellular location">
    <subcellularLocation>
        <location evidence="3">Nucleus</location>
        <location evidence="3">Nuclear pore complex</location>
    </subcellularLocation>
    <subcellularLocation>
        <location>Nucleus membrane</location>
        <topology>Peripheral membrane protein</topology>
        <orientation>Cytoplasmic side</orientation>
    </subcellularLocation>
    <subcellularLocation>
        <location>Nucleus membrane</location>
        <topology>Peripheral membrane protein</topology>
        <orientation>Nucleoplasmic side</orientation>
    </subcellularLocation>
    <text evidence="3">Symmetric distribution.</text>
</comment>
<comment type="miscellaneous">
    <text evidence="7">Present with 1560 molecules/cell in log phase SD medium.</text>
</comment>
<comment type="similarity">
    <text evidence="10">Belongs to the non-repetitive/WGA-negative nucleoporin family.</text>
</comment>
<proteinExistence type="evidence at protein level"/>
<feature type="chain" id="PRO_0000204854" description="Nucleoporin NUP170">
    <location>
        <begin position="1"/>
        <end position="1502"/>
    </location>
</feature>
<feature type="region of interest" description="Disordered" evidence="2">
    <location>
        <begin position="1"/>
        <end position="31"/>
    </location>
</feature>
<feature type="region of interest" description="Leucine-zipper" evidence="1">
    <location>
        <begin position="233"/>
        <end position="261"/>
    </location>
</feature>
<feature type="compositionally biased region" description="Polar residues" evidence="2">
    <location>
        <begin position="18"/>
        <end position="30"/>
    </location>
</feature>
<feature type="modified residue" description="Phosphoserine" evidence="11">
    <location>
        <position position="1247"/>
    </location>
</feature>
<feature type="helix" evidence="12">
    <location>
        <begin position="1001"/>
        <end position="1015"/>
    </location>
</feature>
<feature type="helix" evidence="12">
    <location>
        <begin position="1022"/>
        <end position="1032"/>
    </location>
</feature>
<feature type="helix" evidence="12">
    <location>
        <begin position="1045"/>
        <end position="1056"/>
    </location>
</feature>
<feature type="helix" evidence="12">
    <location>
        <begin position="1060"/>
        <end position="1075"/>
    </location>
</feature>
<feature type="helix" evidence="12">
    <location>
        <begin position="1079"/>
        <end position="1086"/>
    </location>
</feature>
<feature type="strand" evidence="12">
    <location>
        <begin position="1089"/>
        <end position="1093"/>
    </location>
</feature>
<feature type="helix" evidence="12">
    <location>
        <begin position="1095"/>
        <end position="1114"/>
    </location>
</feature>
<feature type="helix" evidence="12">
    <location>
        <begin position="1146"/>
        <end position="1149"/>
    </location>
</feature>
<feature type="strand" evidence="12">
    <location>
        <begin position="1150"/>
        <end position="1152"/>
    </location>
</feature>
<feature type="helix" evidence="12">
    <location>
        <begin position="1155"/>
        <end position="1167"/>
    </location>
</feature>
<feature type="helix" evidence="12">
    <location>
        <begin position="1171"/>
        <end position="1176"/>
    </location>
</feature>
<feature type="helix" evidence="12">
    <location>
        <begin position="1182"/>
        <end position="1188"/>
    </location>
</feature>
<feature type="helix" evidence="12">
    <location>
        <begin position="1196"/>
        <end position="1201"/>
    </location>
</feature>
<feature type="helix" evidence="12">
    <location>
        <begin position="1203"/>
        <end position="1206"/>
    </location>
</feature>
<feature type="helix" evidence="12">
    <location>
        <begin position="1210"/>
        <end position="1221"/>
    </location>
</feature>
<feature type="strand" evidence="12">
    <location>
        <begin position="1222"/>
        <end position="1225"/>
    </location>
</feature>
<feature type="helix" evidence="12">
    <location>
        <begin position="1229"/>
        <end position="1242"/>
    </location>
</feature>
<feature type="helix" evidence="13">
    <location>
        <begin position="1262"/>
        <end position="1264"/>
    </location>
</feature>
<feature type="helix" evidence="13">
    <location>
        <begin position="1265"/>
        <end position="1281"/>
    </location>
</feature>
<feature type="strand" evidence="12">
    <location>
        <begin position="1283"/>
        <end position="1285"/>
    </location>
</feature>
<feature type="helix" evidence="13">
    <location>
        <begin position="1287"/>
        <end position="1299"/>
    </location>
</feature>
<feature type="helix" evidence="13">
    <location>
        <begin position="1304"/>
        <end position="1310"/>
    </location>
</feature>
<feature type="turn" evidence="13">
    <location>
        <begin position="1311"/>
        <end position="1316"/>
    </location>
</feature>
<feature type="helix" evidence="13">
    <location>
        <begin position="1318"/>
        <end position="1327"/>
    </location>
</feature>
<feature type="helix" evidence="13">
    <location>
        <begin position="1333"/>
        <end position="1350"/>
    </location>
</feature>
<feature type="helix" evidence="13">
    <location>
        <begin position="1357"/>
        <end position="1378"/>
    </location>
</feature>
<feature type="turn" evidence="13">
    <location>
        <begin position="1382"/>
        <end position="1384"/>
    </location>
</feature>
<feature type="helix" evidence="13">
    <location>
        <begin position="1387"/>
        <end position="1401"/>
    </location>
</feature>
<feature type="helix" evidence="13">
    <location>
        <begin position="1404"/>
        <end position="1406"/>
    </location>
</feature>
<feature type="turn" evidence="13">
    <location>
        <begin position="1409"/>
        <end position="1412"/>
    </location>
</feature>
<feature type="helix" evidence="13">
    <location>
        <begin position="1413"/>
        <end position="1419"/>
    </location>
</feature>
<feature type="helix" evidence="13">
    <location>
        <begin position="1423"/>
        <end position="1435"/>
    </location>
</feature>
<feature type="helix" evidence="13">
    <location>
        <begin position="1442"/>
        <end position="1458"/>
    </location>
</feature>
<feature type="helix" evidence="13">
    <location>
        <begin position="1460"/>
        <end position="1463"/>
    </location>
</feature>
<feature type="helix" evidence="13">
    <location>
        <begin position="1469"/>
        <end position="1472"/>
    </location>
</feature>
<feature type="turn" evidence="13">
    <location>
        <begin position="1479"/>
        <end position="1481"/>
    </location>
</feature>
<feature type="helix" evidence="13">
    <location>
        <begin position="1483"/>
        <end position="1491"/>
    </location>
</feature>
<dbReference type="EMBL" id="X79489">
    <property type="protein sequence ID" value="CAA56029.1"/>
    <property type="molecule type" value="Genomic_DNA"/>
</dbReference>
<dbReference type="EMBL" id="Z35840">
    <property type="protein sequence ID" value="CAA84900.1"/>
    <property type="molecule type" value="Genomic_DNA"/>
</dbReference>
<dbReference type="EMBL" id="BK006936">
    <property type="protein sequence ID" value="DAA07044.1"/>
    <property type="molecule type" value="Genomic_DNA"/>
</dbReference>
<dbReference type="PIR" id="S45429">
    <property type="entry name" value="S45429"/>
</dbReference>
<dbReference type="RefSeq" id="NP_009474.1">
    <property type="nucleotide sequence ID" value="NM_001178319.1"/>
</dbReference>
<dbReference type="PDB" id="3I5P">
    <property type="method" value="X-ray"/>
    <property type="resolution" value="3.20 A"/>
    <property type="chains" value="A=980-1502"/>
</dbReference>
<dbReference type="PDB" id="3I5Q">
    <property type="method" value="X-ray"/>
    <property type="resolution" value="2.20 A"/>
    <property type="chains" value="A/B=1253-1502"/>
</dbReference>
<dbReference type="PDB" id="7N85">
    <property type="method" value="EM"/>
    <property type="resolution" value="7.60 A"/>
    <property type="chains" value="0/Y=1-1502"/>
</dbReference>
<dbReference type="PDB" id="7N9F">
    <property type="method" value="EM"/>
    <property type="resolution" value="37.00 A"/>
    <property type="chains" value="0/Y=1-1502"/>
</dbReference>
<dbReference type="PDB" id="7WOO">
    <property type="method" value="EM"/>
    <property type="resolution" value="3.71 A"/>
    <property type="chains" value="D=1-1502"/>
</dbReference>
<dbReference type="PDB" id="7WOT">
    <property type="method" value="EM"/>
    <property type="resolution" value="3.73 A"/>
    <property type="chains" value="D/P=1-1502"/>
</dbReference>
<dbReference type="PDB" id="8TJ5">
    <property type="method" value="EM"/>
    <property type="resolution" value="6.60 A"/>
    <property type="chains" value="0/Y=1-1502"/>
</dbReference>
<dbReference type="PDBsum" id="3I5P"/>
<dbReference type="PDBsum" id="3I5Q"/>
<dbReference type="PDBsum" id="7N85"/>
<dbReference type="PDBsum" id="7N9F"/>
<dbReference type="PDBsum" id="7WOO"/>
<dbReference type="PDBsum" id="7WOT"/>
<dbReference type="PDBsum" id="8TJ5"/>
<dbReference type="EMDB" id="EMD-24232"/>
<dbReference type="EMDB" id="EMD-24258"/>
<dbReference type="EMDB" id="EMD-32653"/>
<dbReference type="EMDB" id="EMD-32658"/>
<dbReference type="EMDB" id="EMD-41300"/>
<dbReference type="SMR" id="P38181"/>
<dbReference type="BioGRID" id="32624">
    <property type="interactions" value="951"/>
</dbReference>
<dbReference type="ComplexPortal" id="CPX-824">
    <property type="entry name" value="Nuclear pore complex"/>
</dbReference>
<dbReference type="DIP" id="DIP-2450N"/>
<dbReference type="FunCoup" id="P38181">
    <property type="interactions" value="1433"/>
</dbReference>
<dbReference type="IntAct" id="P38181">
    <property type="interactions" value="30"/>
</dbReference>
<dbReference type="MINT" id="P38181"/>
<dbReference type="STRING" id="4932.YBL079W"/>
<dbReference type="TCDB" id="1.I.1.1.1">
    <property type="family name" value="the nuclear pore complex (npc) family"/>
</dbReference>
<dbReference type="GlyGen" id="P38181">
    <property type="glycosylation" value="1 site"/>
</dbReference>
<dbReference type="iPTMnet" id="P38181"/>
<dbReference type="PaxDb" id="4932-YBL079W"/>
<dbReference type="PeptideAtlas" id="P38181"/>
<dbReference type="EnsemblFungi" id="YBL079W_mRNA">
    <property type="protein sequence ID" value="YBL079W"/>
    <property type="gene ID" value="YBL079W"/>
</dbReference>
<dbReference type="GeneID" id="852199"/>
<dbReference type="KEGG" id="sce:YBL079W"/>
<dbReference type="AGR" id="SGD:S000000175"/>
<dbReference type="SGD" id="S000000175">
    <property type="gene designation" value="NUP170"/>
</dbReference>
<dbReference type="VEuPathDB" id="FungiDB:YBL079W"/>
<dbReference type="eggNOG" id="KOG1900">
    <property type="taxonomic scope" value="Eukaryota"/>
</dbReference>
<dbReference type="GeneTree" id="ENSGT00390000016532"/>
<dbReference type="HOGENOM" id="CLU_000429_0_1_1"/>
<dbReference type="InParanoid" id="P38181"/>
<dbReference type="OMA" id="SWAPFQK"/>
<dbReference type="OrthoDB" id="338970at2759"/>
<dbReference type="BioCyc" id="YEAST:G3O-28970-MONOMER"/>
<dbReference type="Reactome" id="R-SCE-159236">
    <property type="pathway name" value="Transport of Mature mRNA derived from an Intron-Containing Transcript"/>
</dbReference>
<dbReference type="Reactome" id="R-SCE-3371453">
    <property type="pathway name" value="Regulation of HSF1-mediated heat shock response"/>
</dbReference>
<dbReference type="Reactome" id="R-SCE-4085377">
    <property type="pathway name" value="SUMOylation of SUMOylation proteins"/>
</dbReference>
<dbReference type="Reactome" id="R-SCE-4551638">
    <property type="pathway name" value="SUMOylation of chromatin organization proteins"/>
</dbReference>
<dbReference type="Reactome" id="R-SCE-4570464">
    <property type="pathway name" value="SUMOylation of RNA binding proteins"/>
</dbReference>
<dbReference type="BioGRID-ORCS" id="852199">
    <property type="hits" value="7 hits in 10 CRISPR screens"/>
</dbReference>
<dbReference type="EvolutionaryTrace" id="P38181"/>
<dbReference type="PRO" id="PR:P38181"/>
<dbReference type="Proteomes" id="UP000002311">
    <property type="component" value="Chromosome II"/>
</dbReference>
<dbReference type="RNAct" id="P38181">
    <property type="molecule type" value="protein"/>
</dbReference>
<dbReference type="GO" id="GO:0099115">
    <property type="term" value="C:chromosome, subtelomeric region"/>
    <property type="evidence" value="ECO:0000315"/>
    <property type="project" value="SGD"/>
</dbReference>
<dbReference type="GO" id="GO:0005635">
    <property type="term" value="C:nuclear envelope"/>
    <property type="evidence" value="ECO:0000303"/>
    <property type="project" value="ComplexPortal"/>
</dbReference>
<dbReference type="GO" id="GO:0031965">
    <property type="term" value="C:nuclear membrane"/>
    <property type="evidence" value="ECO:0007669"/>
    <property type="project" value="UniProtKB-SubCell"/>
</dbReference>
<dbReference type="GO" id="GO:0005643">
    <property type="term" value="C:nuclear pore"/>
    <property type="evidence" value="ECO:0000314"/>
    <property type="project" value="SGD"/>
</dbReference>
<dbReference type="GO" id="GO:0044611">
    <property type="term" value="C:nuclear pore inner ring"/>
    <property type="evidence" value="ECO:0000314"/>
    <property type="project" value="SGD"/>
</dbReference>
<dbReference type="GO" id="GO:0003682">
    <property type="term" value="F:chromatin binding"/>
    <property type="evidence" value="ECO:0000315"/>
    <property type="project" value="SGD"/>
</dbReference>
<dbReference type="GO" id="GO:1990841">
    <property type="term" value="F:promoter-specific chromatin binding"/>
    <property type="evidence" value="ECO:0000314"/>
    <property type="project" value="SGD"/>
</dbReference>
<dbReference type="GO" id="GO:0044877">
    <property type="term" value="F:protein-containing complex binding"/>
    <property type="evidence" value="ECO:0000314"/>
    <property type="project" value="SGD"/>
</dbReference>
<dbReference type="GO" id="GO:0017056">
    <property type="term" value="F:structural constituent of nuclear pore"/>
    <property type="evidence" value="ECO:0000315"/>
    <property type="project" value="SGD"/>
</dbReference>
<dbReference type="GO" id="GO:0007059">
    <property type="term" value="P:chromosome segregation"/>
    <property type="evidence" value="ECO:0000315"/>
    <property type="project" value="SGD"/>
</dbReference>
<dbReference type="GO" id="GO:0031507">
    <property type="term" value="P:heterochromatin formation"/>
    <property type="evidence" value="ECO:0000315"/>
    <property type="project" value="SGD"/>
</dbReference>
<dbReference type="GO" id="GO:0051028">
    <property type="term" value="P:mRNA transport"/>
    <property type="evidence" value="ECO:0007669"/>
    <property type="project" value="UniProtKB-KW"/>
</dbReference>
<dbReference type="GO" id="GO:0051292">
    <property type="term" value="P:nuclear pore complex assembly"/>
    <property type="evidence" value="ECO:0000316"/>
    <property type="project" value="SGD"/>
</dbReference>
<dbReference type="GO" id="GO:0006913">
    <property type="term" value="P:nucleocytoplasmic transport"/>
    <property type="evidence" value="ECO:0000303"/>
    <property type="project" value="ComplexPortal"/>
</dbReference>
<dbReference type="GO" id="GO:0006606">
    <property type="term" value="P:protein import into nucleus"/>
    <property type="evidence" value="ECO:0000318"/>
    <property type="project" value="GO_Central"/>
</dbReference>
<dbReference type="GO" id="GO:0036228">
    <property type="term" value="P:protein localization to nuclear inner membrane"/>
    <property type="evidence" value="ECO:0000315"/>
    <property type="project" value="SGD"/>
</dbReference>
<dbReference type="GO" id="GO:0006405">
    <property type="term" value="P:RNA export from nucleus"/>
    <property type="evidence" value="ECO:0000318"/>
    <property type="project" value="GO_Central"/>
</dbReference>
<dbReference type="GO" id="GO:0034398">
    <property type="term" value="P:telomere tethering at nuclear periphery"/>
    <property type="evidence" value="ECO:0000315"/>
    <property type="project" value="SGD"/>
</dbReference>
<dbReference type="GO" id="GO:0000972">
    <property type="term" value="P:transcription-dependent tethering of RNA polymerase II gene DNA at nuclear periphery"/>
    <property type="evidence" value="ECO:0000318"/>
    <property type="project" value="GO_Central"/>
</dbReference>
<dbReference type="FunFam" id="1.20.58.1780:FF:000005">
    <property type="entry name" value="Nuclear pore complex subunit"/>
    <property type="match status" value="1"/>
</dbReference>
<dbReference type="FunFam" id="1.25.40.440:FF:000001">
    <property type="entry name" value="Nuclear pore complex subunit"/>
    <property type="match status" value="1"/>
</dbReference>
<dbReference type="FunFam" id="1.10.167.20:FF:000001">
    <property type="entry name" value="Nucleoporin NUP170"/>
    <property type="match status" value="1"/>
</dbReference>
<dbReference type="FunFam" id="1.20.120.1050:FF:000001">
    <property type="entry name" value="Nucleoporin NUP170"/>
    <property type="match status" value="1"/>
</dbReference>
<dbReference type="FunFam" id="1.25.40.450:FF:000002">
    <property type="entry name" value="Putative non-repetitive nucleoporin"/>
    <property type="match status" value="1"/>
</dbReference>
<dbReference type="Gene3D" id="1.10.167.20">
    <property type="match status" value="1"/>
</dbReference>
<dbReference type="Gene3D" id="1.20.120.1050">
    <property type="match status" value="1"/>
</dbReference>
<dbReference type="Gene3D" id="1.20.58.1780">
    <property type="match status" value="1"/>
</dbReference>
<dbReference type="Gene3D" id="1.25.40.440">
    <property type="entry name" value="Nucleoporin, helical domain, central subdomain"/>
    <property type="match status" value="1"/>
</dbReference>
<dbReference type="Gene3D" id="1.25.40.450">
    <property type="entry name" value="Nucleoporin, helical domain, N-terminal subdomain"/>
    <property type="match status" value="1"/>
</dbReference>
<dbReference type="InterPro" id="IPR007187">
    <property type="entry name" value="Nucleoporin_Nup133/Nup155_C"/>
</dbReference>
<dbReference type="InterPro" id="IPR014908">
    <property type="entry name" value="Nucleoporin_Nup133/Nup155_N"/>
</dbReference>
<dbReference type="InterPro" id="IPR004870">
    <property type="entry name" value="Nucleoporin_Nup155"/>
</dbReference>
<dbReference type="InterPro" id="IPR042533">
    <property type="entry name" value="Nucleoporin_Nup155_C_1"/>
</dbReference>
<dbReference type="InterPro" id="IPR042537">
    <property type="entry name" value="Nucleoporin_Nup155_C_2"/>
</dbReference>
<dbReference type="PANTHER" id="PTHR10350">
    <property type="entry name" value="NUCLEAR PORE COMPLEX PROTEIN NUP155"/>
    <property type="match status" value="1"/>
</dbReference>
<dbReference type="PANTHER" id="PTHR10350:SF6">
    <property type="entry name" value="NUCLEAR PORE COMPLEX PROTEIN NUP155"/>
    <property type="match status" value="1"/>
</dbReference>
<dbReference type="Pfam" id="PF03177">
    <property type="entry name" value="Nucleoporin_C"/>
    <property type="match status" value="1"/>
</dbReference>
<dbReference type="Pfam" id="PF08801">
    <property type="entry name" value="Nucleoporin_N"/>
    <property type="match status" value="1"/>
</dbReference>
<gene>
    <name type="primary">NUP170</name>
    <name type="synonym">NLE3</name>
    <name type="ordered locus">YBL079W</name>
    <name type="ORF">YBL0725</name>
</gene>
<evidence type="ECO:0000255" key="1"/>
<evidence type="ECO:0000256" key="2">
    <source>
        <dbReference type="SAM" id="MobiDB-lite"/>
    </source>
</evidence>
<evidence type="ECO:0000269" key="3">
    <source>
    </source>
</evidence>
<evidence type="ECO:0000269" key="4">
    <source>
    </source>
</evidence>
<evidence type="ECO:0000269" key="5">
    <source>
    </source>
</evidence>
<evidence type="ECO:0000269" key="6">
    <source>
    </source>
</evidence>
<evidence type="ECO:0000269" key="7">
    <source>
    </source>
</evidence>
<evidence type="ECO:0000269" key="8">
    <source>
    </source>
</evidence>
<evidence type="ECO:0000269" key="9">
    <source>
    </source>
</evidence>
<evidence type="ECO:0000305" key="10"/>
<evidence type="ECO:0007744" key="11">
    <source>
    </source>
</evidence>
<evidence type="ECO:0007829" key="12">
    <source>
        <dbReference type="PDB" id="3I5P"/>
    </source>
</evidence>
<evidence type="ECO:0007829" key="13">
    <source>
        <dbReference type="PDB" id="3I5Q"/>
    </source>
</evidence>
<keyword id="KW-0002">3D-structure</keyword>
<keyword id="KW-0903">Direct protein sequencing</keyword>
<keyword id="KW-0472">Membrane</keyword>
<keyword id="KW-0509">mRNA transport</keyword>
<keyword id="KW-0906">Nuclear pore complex</keyword>
<keyword id="KW-0539">Nucleus</keyword>
<keyword id="KW-0597">Phosphoprotein</keyword>
<keyword id="KW-0653">Protein transport</keyword>
<keyword id="KW-1185">Reference proteome</keyword>
<keyword id="KW-0811">Translocation</keyword>
<keyword id="KW-0813">Transport</keyword>
<name>NU170_YEAST</name>
<reference key="1">
    <citation type="journal article" date="1995" name="Yeast">
        <title>Sequence analysis of a 78.6 kb segment of the left end of Saccharomyces cerevisiae chromosome II.</title>
        <authorList>
            <person name="Obermaier B."/>
            <person name="Gassenhuber J."/>
            <person name="Piravandi E."/>
            <person name="Domdey H."/>
        </authorList>
    </citation>
    <scope>NUCLEOTIDE SEQUENCE [GENOMIC DNA]</scope>
    <source>
        <strain>ATCC 204508 / S288c</strain>
    </source>
</reference>
<reference key="2">
    <citation type="journal article" date="1994" name="EMBO J.">
        <title>Complete DNA sequence of yeast chromosome II.</title>
        <authorList>
            <person name="Feldmann H."/>
            <person name="Aigle M."/>
            <person name="Aljinovic G."/>
            <person name="Andre B."/>
            <person name="Baclet M.C."/>
            <person name="Barthe C."/>
            <person name="Baur A."/>
            <person name="Becam A.-M."/>
            <person name="Biteau N."/>
            <person name="Boles E."/>
            <person name="Brandt T."/>
            <person name="Brendel M."/>
            <person name="Brueckner M."/>
            <person name="Bussereau F."/>
            <person name="Christiansen C."/>
            <person name="Contreras R."/>
            <person name="Crouzet M."/>
            <person name="Cziepluch C."/>
            <person name="Demolis N."/>
            <person name="Delaveau T."/>
            <person name="Doignon F."/>
            <person name="Domdey H."/>
            <person name="Duesterhus S."/>
            <person name="Dubois E."/>
            <person name="Dujon B."/>
            <person name="El Bakkoury M."/>
            <person name="Entian K.-D."/>
            <person name="Feuermann M."/>
            <person name="Fiers W."/>
            <person name="Fobo G.M."/>
            <person name="Fritz C."/>
            <person name="Gassenhuber J."/>
            <person name="Glansdorff N."/>
            <person name="Goffeau A."/>
            <person name="Grivell L.A."/>
            <person name="de Haan M."/>
            <person name="Hein C."/>
            <person name="Herbert C.J."/>
            <person name="Hollenberg C.P."/>
            <person name="Holmstroem K."/>
            <person name="Jacq C."/>
            <person name="Jacquet M."/>
            <person name="Jauniaux J.-C."/>
            <person name="Jonniaux J.-L."/>
            <person name="Kallesoee T."/>
            <person name="Kiesau P."/>
            <person name="Kirchrath L."/>
            <person name="Koetter P."/>
            <person name="Korol S."/>
            <person name="Liebl S."/>
            <person name="Logghe M."/>
            <person name="Lohan A.J.E."/>
            <person name="Louis E.J."/>
            <person name="Li Z.Y."/>
            <person name="Maat M.J."/>
            <person name="Mallet L."/>
            <person name="Mannhaupt G."/>
            <person name="Messenguy F."/>
            <person name="Miosga T."/>
            <person name="Molemans F."/>
            <person name="Mueller S."/>
            <person name="Nasr F."/>
            <person name="Obermaier B."/>
            <person name="Perea J."/>
            <person name="Pierard A."/>
            <person name="Piravandi E."/>
            <person name="Pohl F.M."/>
            <person name="Pohl T.M."/>
            <person name="Potier S."/>
            <person name="Proft M."/>
            <person name="Purnelle B."/>
            <person name="Ramezani Rad M."/>
            <person name="Rieger M."/>
            <person name="Rose M."/>
            <person name="Schaaff-Gerstenschlaeger I."/>
            <person name="Scherens B."/>
            <person name="Schwarzlose C."/>
            <person name="Skala J."/>
            <person name="Slonimski P.P."/>
            <person name="Smits P.H.M."/>
            <person name="Souciet J.-L."/>
            <person name="Steensma H.Y."/>
            <person name="Stucka R."/>
            <person name="Urrestarazu L.A."/>
            <person name="van der Aart Q.J.M."/>
            <person name="Van Dyck L."/>
            <person name="Vassarotti A."/>
            <person name="Vetter I."/>
            <person name="Vierendeels F."/>
            <person name="Vissers S."/>
            <person name="Wagner G."/>
            <person name="de Wergifosse P."/>
            <person name="Wolfe K.H."/>
            <person name="Zagulski M."/>
            <person name="Zimmermann F.K."/>
            <person name="Mewes H.-W."/>
            <person name="Kleine K."/>
        </authorList>
    </citation>
    <scope>NUCLEOTIDE SEQUENCE [LARGE SCALE GENOMIC DNA]</scope>
    <source>
        <strain>ATCC 204508 / S288c</strain>
    </source>
</reference>
<reference key="3">
    <citation type="journal article" date="2014" name="G3 (Bethesda)">
        <title>The reference genome sequence of Saccharomyces cerevisiae: Then and now.</title>
        <authorList>
            <person name="Engel S.R."/>
            <person name="Dietrich F.S."/>
            <person name="Fisk D.G."/>
            <person name="Binkley G."/>
            <person name="Balakrishnan R."/>
            <person name="Costanzo M.C."/>
            <person name="Dwight S.S."/>
            <person name="Hitz B.C."/>
            <person name="Karra K."/>
            <person name="Nash R.S."/>
            <person name="Weng S."/>
            <person name="Wong E.D."/>
            <person name="Lloyd P."/>
            <person name="Skrzypek M.S."/>
            <person name="Miyasato S.R."/>
            <person name="Simison M."/>
            <person name="Cherry J.M."/>
        </authorList>
    </citation>
    <scope>GENOME REANNOTATION</scope>
    <source>
        <strain>ATCC 204508 / S288c</strain>
    </source>
</reference>
<reference key="4">
    <citation type="journal article" date="1995" name="J. Cell Biol.">
        <title>Two novel related yeast nucleoporins Nup170p and Nup157p: complementation with the vertebrate homologue Nup155p and functional interactions with the yeast nuclear pore-membrane protein Pom152p.</title>
        <authorList>
            <person name="Aitchison J.D."/>
            <person name="Rout M.P."/>
            <person name="Marelli M."/>
            <person name="Blobel G."/>
            <person name="Wozniak R.W."/>
        </authorList>
    </citation>
    <scope>CHARACTERIZATION</scope>
    <scope>PROTEIN SEQUENCE OF 117-133 AND 153-166</scope>
</reference>
<reference key="5">
    <citation type="journal article" date="1998" name="J. Cell Biol.">
        <title>Specific binding of the karyopherin Kap121p to a subunit of the nuclear pore complex containing Nup53p, Nup59p, and Nup170p.</title>
        <authorList>
            <person name="Marelli M."/>
            <person name="Aitchison J.D."/>
            <person name="Wozniak R.W."/>
        </authorList>
    </citation>
    <scope>FUNCTION</scope>
    <scope>SUBCOMPLEX WITH NUP59 AND NUP53</scope>
</reference>
<reference key="6">
    <citation type="journal article" date="2002" name="J. Cell Biol.">
        <title>Karyopherins in nuclear pore biogenesis: a role for Kap121p in the assembly of Nup53p into nuclear pore complexes.</title>
        <authorList>
            <person name="Lusk C.P."/>
            <person name="Makhnevych T."/>
            <person name="Marelli M."/>
            <person name="Aitchison J.D."/>
            <person name="Wozniak R.W."/>
        </authorList>
    </citation>
    <scope>FUNCTION</scope>
    <scope>COMPETITION WITH NUP53 FOR PSE1 BINDING</scope>
</reference>
<reference key="7">
    <citation type="journal article" date="2003" name="Cell">
        <title>Cell cycle regulated transport controlled by alterations in the nuclear pore complex.</title>
        <authorList>
            <person name="Makhnevych T."/>
            <person name="Lusk C.P."/>
            <person name="Anderson A.M."/>
            <person name="Aitchison J.D."/>
            <person name="Wozniak R.W."/>
        </authorList>
    </citation>
    <scope>FUNCTION</scope>
    <scope>MITOTIC PSE1 TRANSPORT INHIBITION</scope>
    <scope>NPC ASSEMBLY</scope>
</reference>
<reference key="8">
    <citation type="journal article" date="2003" name="Nature">
        <title>Global analysis of protein expression in yeast.</title>
        <authorList>
            <person name="Ghaemmaghami S."/>
            <person name="Huh W.-K."/>
            <person name="Bower K."/>
            <person name="Howson R.W."/>
            <person name="Belle A."/>
            <person name="Dephoure N."/>
            <person name="O'Shea E.K."/>
            <person name="Weissman J.S."/>
        </authorList>
    </citation>
    <scope>LEVEL OF PROTEIN EXPRESSION [LARGE SCALE ANALYSIS]</scope>
</reference>
<reference key="9">
    <citation type="journal article" date="2000" name="J. Cell Biol.">
        <title>The yeast nuclear pore complex: composition, architecture, and transport mechanism.</title>
        <authorList>
            <person name="Rout M.P."/>
            <person name="Aitchison J.D."/>
            <person name="Suprapto A."/>
            <person name="Hjertaas K."/>
            <person name="Zhao Y."/>
            <person name="Chait B.T."/>
        </authorList>
    </citation>
    <scope>FUNCTION</scope>
    <scope>IDENTIFICATION IN THE NUCLEAR PORE COMPLEX</scope>
    <scope>SUBCELLULAR LOCATION</scope>
</reference>
<reference key="10">
    <citation type="journal article" date="2001" name="Genetics">
        <title>Novel role for a Saccharomyces cerevisiae nucleoporin, Nup170p, in chromosome segregation.</title>
        <authorList>
            <person name="Kerscher O."/>
            <person name="Hieter P."/>
            <person name="Winey M."/>
            <person name="Basrai M.A."/>
        </authorList>
    </citation>
    <scope>FUNCTION</scope>
    <scope>CHROMOSOME TRANSMISSION FIDELITY</scope>
</reference>
<reference key="11">
    <citation type="journal article" date="2002" name="J. Cell Biol.">
        <title>The yeast nuclear pore complex functionally interacts with components of the spindle assembly checkpoint.</title>
        <authorList>
            <person name="Iouk T."/>
            <person name="Kerscher O."/>
            <person name="Scott R.J."/>
            <person name="Basrai M.A."/>
            <person name="Wozniak R.W."/>
        </authorList>
    </citation>
    <scope>FUNCTION</scope>
    <scope>INTERACTION WITH NUP157 AND NUP53</scope>
</reference>
<reference key="12">
    <citation type="journal article" date="2003" name="Dev. Cell">
        <title>Peering through the pore: nuclear pore complex structure, assembly, and function.</title>
        <authorList>
            <person name="Suntharalingam M."/>
            <person name="Wente S.R."/>
        </authorList>
    </citation>
    <scope>REVIEW</scope>
</reference>
<reference key="13">
    <citation type="journal article" date="2008" name="Mol. Cell. Proteomics">
        <title>A multidimensional chromatography technology for in-depth phosphoproteome analysis.</title>
        <authorList>
            <person name="Albuquerque C.P."/>
            <person name="Smolka M.B."/>
            <person name="Payne S.H."/>
            <person name="Bafna V."/>
            <person name="Eng J."/>
            <person name="Zhou H."/>
        </authorList>
    </citation>
    <scope>PHOSPHORYLATION [LARGE SCALE ANALYSIS] AT SER-1247</scope>
    <scope>IDENTIFICATION BY MASS SPECTROMETRY [LARGE SCALE ANALYSIS]</scope>
</reference>
<reference key="14">
    <citation type="journal article" date="2009" name="J. Biol. Chem.">
        <title>Architectural nucleoporins Nup157/170 and Nup133 are structurally related and descend from a second ancestral element.</title>
        <authorList>
            <person name="Whittle J.R."/>
            <person name="Schwartz T.U."/>
        </authorList>
    </citation>
    <scope>X-RAY CRYSTALLOGRAPHY (2.20 ANGSTROMS) OF 980-1502</scope>
</reference>